<keyword id="KW-1185">Reference proteome</keyword>
<feature type="chain" id="PRO_0000239033" description="UBA-like domain-containing protein 2">
    <location>
        <begin position="1"/>
        <end position="166"/>
    </location>
</feature>
<feature type="region of interest" description="Disordered" evidence="1">
    <location>
        <begin position="120"/>
        <end position="166"/>
    </location>
</feature>
<reference key="1">
    <citation type="submission" date="2004-10" db="EMBL/GenBank/DDBJ databases">
        <authorList>
            <consortium name="NIH - Xenopus Gene Collection (XGC) project"/>
        </authorList>
    </citation>
    <scope>NUCLEOTIDE SEQUENCE [LARGE SCALE MRNA]</scope>
    <source>
        <tissue>Embryo</tissue>
    </source>
</reference>
<name>UBAD2_XENTR</name>
<gene>
    <name type="primary">ubald2</name>
    <name type="synonym">fam100b</name>
</gene>
<accession>Q5XGE4</accession>
<evidence type="ECO:0000256" key="1">
    <source>
        <dbReference type="SAM" id="MobiDB-lite"/>
    </source>
</evidence>
<evidence type="ECO:0000305" key="2"/>
<sequence>MSVNMEELRHQVMINQFVLAAGCAADQAKQLLQAAHWQFETALSAFFQESNVPSAQHHPHMMCTPSNTPATPPNFPDALAMFSKLRTSESLQNSSSPAASNACSPPGNFNPYWASSPPNQQPVWLPPASPTTHLHHHHHHPQPVWPPNSQPTGGPQKAMAAMDGQR</sequence>
<dbReference type="EMBL" id="BC084498">
    <property type="protein sequence ID" value="AAH84498.1"/>
    <property type="molecule type" value="mRNA"/>
</dbReference>
<dbReference type="RefSeq" id="NP_001011143.1">
    <property type="nucleotide sequence ID" value="NM_001011143.1"/>
</dbReference>
<dbReference type="SMR" id="Q5XGE4"/>
<dbReference type="FunCoup" id="Q5XGE4">
    <property type="interactions" value="23"/>
</dbReference>
<dbReference type="STRING" id="8364.ENSXETP00000024001"/>
<dbReference type="PaxDb" id="8364-ENSXETP00000054035"/>
<dbReference type="DNASU" id="496560"/>
<dbReference type="GeneID" id="496560"/>
<dbReference type="KEGG" id="xtr:496560"/>
<dbReference type="AGR" id="Xenbase:XB-GENE-987732"/>
<dbReference type="CTD" id="283991"/>
<dbReference type="Xenbase" id="XB-GENE-987732">
    <property type="gene designation" value="ubald2"/>
</dbReference>
<dbReference type="eggNOG" id="ENOG502S43S">
    <property type="taxonomic scope" value="Eukaryota"/>
</dbReference>
<dbReference type="InParanoid" id="Q5XGE4"/>
<dbReference type="OMA" id="SWGMTPP"/>
<dbReference type="OrthoDB" id="6093553at2759"/>
<dbReference type="Proteomes" id="UP000008143">
    <property type="component" value="Chromosome 10"/>
</dbReference>
<dbReference type="Bgee" id="ENSXETG00000039165">
    <property type="expression patterns" value="Expressed in neurula embryo and 14 other cell types or tissues"/>
</dbReference>
<dbReference type="CDD" id="cd14343">
    <property type="entry name" value="UBA_F100B_like"/>
    <property type="match status" value="1"/>
</dbReference>
<dbReference type="Gene3D" id="1.10.8.10">
    <property type="entry name" value="DNA helicase RuvA subunit, C-terminal domain"/>
    <property type="match status" value="1"/>
</dbReference>
<dbReference type="InterPro" id="IPR009060">
    <property type="entry name" value="UBA-like_sf"/>
</dbReference>
<dbReference type="InterPro" id="IPR054109">
    <property type="entry name" value="UBA_8"/>
</dbReference>
<dbReference type="InterPro" id="IPR039310">
    <property type="entry name" value="UBALD1/2"/>
</dbReference>
<dbReference type="PANTHER" id="PTHR31993">
    <property type="entry name" value="UBA-LIKE DOMAIN-CONTAINING PROTEIN 2"/>
    <property type="match status" value="1"/>
</dbReference>
<dbReference type="PANTHER" id="PTHR31993:SF6">
    <property type="entry name" value="UBA-LIKE DOMAIN-CONTAINING PROTEIN 2"/>
    <property type="match status" value="1"/>
</dbReference>
<dbReference type="Pfam" id="PF22566">
    <property type="entry name" value="UBA_8"/>
    <property type="match status" value="1"/>
</dbReference>
<dbReference type="SUPFAM" id="SSF46934">
    <property type="entry name" value="UBA-like"/>
    <property type="match status" value="1"/>
</dbReference>
<organism>
    <name type="scientific">Xenopus tropicalis</name>
    <name type="common">Western clawed frog</name>
    <name type="synonym">Silurana tropicalis</name>
    <dbReference type="NCBI Taxonomy" id="8364"/>
    <lineage>
        <taxon>Eukaryota</taxon>
        <taxon>Metazoa</taxon>
        <taxon>Chordata</taxon>
        <taxon>Craniata</taxon>
        <taxon>Vertebrata</taxon>
        <taxon>Euteleostomi</taxon>
        <taxon>Amphibia</taxon>
        <taxon>Batrachia</taxon>
        <taxon>Anura</taxon>
        <taxon>Pipoidea</taxon>
        <taxon>Pipidae</taxon>
        <taxon>Xenopodinae</taxon>
        <taxon>Xenopus</taxon>
        <taxon>Silurana</taxon>
    </lineage>
</organism>
<protein>
    <recommendedName>
        <fullName>UBA-like domain-containing protein 2</fullName>
    </recommendedName>
</protein>
<proteinExistence type="evidence at transcript level"/>
<comment type="similarity">
    <text evidence="2">Belongs to the UBALD family.</text>
</comment>